<feature type="chain" id="PRO_0000391109" description="NADH-quinone oxidoreductase subunit N">
    <location>
        <begin position="1"/>
        <end position="486"/>
    </location>
</feature>
<feature type="transmembrane region" description="Helical" evidence="1">
    <location>
        <begin position="5"/>
        <end position="25"/>
    </location>
</feature>
<feature type="transmembrane region" description="Helical" evidence="1">
    <location>
        <begin position="41"/>
        <end position="61"/>
    </location>
</feature>
<feature type="transmembrane region" description="Helical" evidence="1">
    <location>
        <begin position="77"/>
        <end position="97"/>
    </location>
</feature>
<feature type="transmembrane region" description="Helical" evidence="1">
    <location>
        <begin position="118"/>
        <end position="138"/>
    </location>
</feature>
<feature type="transmembrane region" description="Helical" evidence="1">
    <location>
        <begin position="165"/>
        <end position="185"/>
    </location>
</feature>
<feature type="transmembrane region" description="Helical" evidence="1">
    <location>
        <begin position="209"/>
        <end position="229"/>
    </location>
</feature>
<feature type="transmembrane region" description="Helical" evidence="1">
    <location>
        <begin position="245"/>
        <end position="265"/>
    </location>
</feature>
<feature type="transmembrane region" description="Helical" evidence="1">
    <location>
        <begin position="275"/>
        <end position="295"/>
    </location>
</feature>
<feature type="transmembrane region" description="Helical" evidence="1">
    <location>
        <begin position="304"/>
        <end position="324"/>
    </location>
</feature>
<feature type="transmembrane region" description="Helical" evidence="1">
    <location>
        <begin position="335"/>
        <end position="355"/>
    </location>
</feature>
<feature type="transmembrane region" description="Helical" evidence="1">
    <location>
        <begin position="380"/>
        <end position="400"/>
    </location>
</feature>
<feature type="transmembrane region" description="Helical" evidence="1">
    <location>
        <begin position="413"/>
        <end position="433"/>
    </location>
</feature>
<feature type="transmembrane region" description="Helical" evidence="1">
    <location>
        <begin position="458"/>
        <end position="478"/>
    </location>
</feature>
<name>NUON_BDEBA</name>
<organism>
    <name type="scientific">Bdellovibrio bacteriovorus (strain ATCC 15356 / DSM 50701 / NCIMB 9529 / HD100)</name>
    <dbReference type="NCBI Taxonomy" id="264462"/>
    <lineage>
        <taxon>Bacteria</taxon>
        <taxon>Pseudomonadati</taxon>
        <taxon>Bdellovibrionota</taxon>
        <taxon>Bdellovibrionia</taxon>
        <taxon>Bdellovibrionales</taxon>
        <taxon>Pseudobdellovibrionaceae</taxon>
        <taxon>Bdellovibrio</taxon>
    </lineage>
</organism>
<protein>
    <recommendedName>
        <fullName evidence="1">NADH-quinone oxidoreductase subunit N</fullName>
        <ecNumber evidence="1">7.1.1.-</ecNumber>
    </recommendedName>
    <alternativeName>
        <fullName evidence="1">NADH dehydrogenase I subunit N</fullName>
    </alternativeName>
    <alternativeName>
        <fullName evidence="1">NDH-1 subunit N</fullName>
    </alternativeName>
</protein>
<sequence length="486" mass="51977">MNINIGLSDVLLISPMIALFLASLLPITMKVLRGNREQHALITLGQALMGIVAAVVLLVVFGGSDKTAFNNGLIFDGVTQWMGIIALAGAGAAMVMMYENPSTTGKQFSELIFLAMSSAVGMLILVSAVDLLMVFIGLEMMSLALYLMIAMSHEEKLSKEAALKYFILGSFASAIFLYGVAFIFGSTGGTNILSFMDNAAELVQTSRLFLFGVTFVILGFCFKVSIAPFHAWTPDVYQGAPTPHTAFMATAVKTVSFAAFLRIIATKSLTGSDQLFDILQWMAVITMIVGNAAAIMQNNFKRMIAYSSVAHSGYLMVGLITAGVSDNGAFGASGVIFYLLAYGLMTIGAFAIAAMLEKSENHIVNIDDLAGFAKQRPMLALCLTVFLLSLAGIPPTLGFFGKFYMFNAAIGEGLLWLAIWGMLNSVIGVYYYLRPIVVMYMKEGNAEIAGHSLNATTVTAVVMALAIVLMGFVSGPIFSAVEKSLL</sequence>
<gene>
    <name evidence="1" type="primary">nuoN</name>
    <name type="ordered locus">Bd3886</name>
</gene>
<proteinExistence type="inferred from homology"/>
<reference key="1">
    <citation type="journal article" date="2004" name="Science">
        <title>A predator unmasked: life cycle of Bdellovibrio bacteriovorus from a genomic perspective.</title>
        <authorList>
            <person name="Rendulic S."/>
            <person name="Jagtap P."/>
            <person name="Rosinus A."/>
            <person name="Eppinger M."/>
            <person name="Baar C."/>
            <person name="Lanz C."/>
            <person name="Keller H."/>
            <person name="Lambert C."/>
            <person name="Evans K.J."/>
            <person name="Goesmann A."/>
            <person name="Meyer F."/>
            <person name="Sockett R.E."/>
            <person name="Schuster S.C."/>
        </authorList>
    </citation>
    <scope>NUCLEOTIDE SEQUENCE [LARGE SCALE GENOMIC DNA]</scope>
    <source>
        <strain>ATCC 15356 / DSM 50701 / NCIMB 9529 / HD100</strain>
    </source>
</reference>
<keyword id="KW-0997">Cell inner membrane</keyword>
<keyword id="KW-1003">Cell membrane</keyword>
<keyword id="KW-0472">Membrane</keyword>
<keyword id="KW-0520">NAD</keyword>
<keyword id="KW-0874">Quinone</keyword>
<keyword id="KW-1185">Reference proteome</keyword>
<keyword id="KW-1278">Translocase</keyword>
<keyword id="KW-0812">Transmembrane</keyword>
<keyword id="KW-1133">Transmembrane helix</keyword>
<keyword id="KW-0813">Transport</keyword>
<keyword id="KW-0830">Ubiquinone</keyword>
<accession>Q6MGN8</accession>
<dbReference type="EC" id="7.1.1.-" evidence="1"/>
<dbReference type="EMBL" id="BX842656">
    <property type="protein sequence ID" value="CAE81241.1"/>
    <property type="molecule type" value="Genomic_DNA"/>
</dbReference>
<dbReference type="RefSeq" id="WP_011166184.1">
    <property type="nucleotide sequence ID" value="NC_005363.1"/>
</dbReference>
<dbReference type="SMR" id="Q6MGN8"/>
<dbReference type="STRING" id="264462.Bd3886"/>
<dbReference type="GeneID" id="93014652"/>
<dbReference type="KEGG" id="bba:Bd3886"/>
<dbReference type="eggNOG" id="COG1007">
    <property type="taxonomic scope" value="Bacteria"/>
</dbReference>
<dbReference type="HOGENOM" id="CLU_007100_1_5_7"/>
<dbReference type="Proteomes" id="UP000008080">
    <property type="component" value="Chromosome"/>
</dbReference>
<dbReference type="GO" id="GO:0005886">
    <property type="term" value="C:plasma membrane"/>
    <property type="evidence" value="ECO:0007669"/>
    <property type="project" value="UniProtKB-SubCell"/>
</dbReference>
<dbReference type="GO" id="GO:0008137">
    <property type="term" value="F:NADH dehydrogenase (ubiquinone) activity"/>
    <property type="evidence" value="ECO:0007669"/>
    <property type="project" value="InterPro"/>
</dbReference>
<dbReference type="GO" id="GO:0050136">
    <property type="term" value="F:NADH:ubiquinone reductase (non-electrogenic) activity"/>
    <property type="evidence" value="ECO:0007669"/>
    <property type="project" value="UniProtKB-UniRule"/>
</dbReference>
<dbReference type="GO" id="GO:0048038">
    <property type="term" value="F:quinone binding"/>
    <property type="evidence" value="ECO:0007669"/>
    <property type="project" value="UniProtKB-KW"/>
</dbReference>
<dbReference type="GO" id="GO:0042773">
    <property type="term" value="P:ATP synthesis coupled electron transport"/>
    <property type="evidence" value="ECO:0007669"/>
    <property type="project" value="InterPro"/>
</dbReference>
<dbReference type="HAMAP" id="MF_00445">
    <property type="entry name" value="NDH1_NuoN_1"/>
    <property type="match status" value="1"/>
</dbReference>
<dbReference type="InterPro" id="IPR010096">
    <property type="entry name" value="NADH-Q_OxRdtase_suN/2"/>
</dbReference>
<dbReference type="InterPro" id="IPR001750">
    <property type="entry name" value="ND/Mrp_TM"/>
</dbReference>
<dbReference type="NCBIfam" id="TIGR01770">
    <property type="entry name" value="NDH_I_N"/>
    <property type="match status" value="1"/>
</dbReference>
<dbReference type="PANTHER" id="PTHR22773">
    <property type="entry name" value="NADH DEHYDROGENASE"/>
    <property type="match status" value="1"/>
</dbReference>
<dbReference type="Pfam" id="PF00361">
    <property type="entry name" value="Proton_antipo_M"/>
    <property type="match status" value="1"/>
</dbReference>
<comment type="function">
    <text evidence="1">NDH-1 shuttles electrons from NADH, via FMN and iron-sulfur (Fe-S) centers, to quinones in the respiratory chain. The immediate electron acceptor for the enzyme in this species is believed to be ubiquinone. Couples the redox reaction to proton translocation (for every two electrons transferred, four hydrogen ions are translocated across the cytoplasmic membrane), and thus conserves the redox energy in a proton gradient.</text>
</comment>
<comment type="catalytic activity">
    <reaction evidence="1">
        <text>a quinone + NADH + 5 H(+)(in) = a quinol + NAD(+) + 4 H(+)(out)</text>
        <dbReference type="Rhea" id="RHEA:57888"/>
        <dbReference type="ChEBI" id="CHEBI:15378"/>
        <dbReference type="ChEBI" id="CHEBI:24646"/>
        <dbReference type="ChEBI" id="CHEBI:57540"/>
        <dbReference type="ChEBI" id="CHEBI:57945"/>
        <dbReference type="ChEBI" id="CHEBI:132124"/>
    </reaction>
</comment>
<comment type="subunit">
    <text evidence="1">NDH-1 is composed of 14 different subunits. Subunits NuoA, H, J, K, L, M, N constitute the membrane sector of the complex.</text>
</comment>
<comment type="subcellular location">
    <subcellularLocation>
        <location evidence="1">Cell inner membrane</location>
        <topology evidence="1">Multi-pass membrane protein</topology>
    </subcellularLocation>
</comment>
<comment type="similarity">
    <text evidence="1">Belongs to the complex I subunit 2 family.</text>
</comment>
<evidence type="ECO:0000255" key="1">
    <source>
        <dbReference type="HAMAP-Rule" id="MF_00445"/>
    </source>
</evidence>